<proteinExistence type="inferred from homology"/>
<feature type="chain" id="PRO_1000132839" description="Ribosomal protein L11 methyltransferase">
    <location>
        <begin position="1"/>
        <end position="308"/>
    </location>
</feature>
<feature type="binding site" evidence="1">
    <location>
        <position position="160"/>
    </location>
    <ligand>
        <name>S-adenosyl-L-methionine</name>
        <dbReference type="ChEBI" id="CHEBI:59789"/>
    </ligand>
</feature>
<feature type="binding site" evidence="1">
    <location>
        <position position="181"/>
    </location>
    <ligand>
        <name>S-adenosyl-L-methionine</name>
        <dbReference type="ChEBI" id="CHEBI:59789"/>
    </ligand>
</feature>
<feature type="binding site" evidence="1">
    <location>
        <position position="203"/>
    </location>
    <ligand>
        <name>S-adenosyl-L-methionine</name>
        <dbReference type="ChEBI" id="CHEBI:59789"/>
    </ligand>
</feature>
<feature type="binding site" evidence="1">
    <location>
        <position position="245"/>
    </location>
    <ligand>
        <name>S-adenosyl-L-methionine</name>
        <dbReference type="ChEBI" id="CHEBI:59789"/>
    </ligand>
</feature>
<organism>
    <name type="scientific">Thermoanaerobacter pseudethanolicus (strain ATCC 33223 / 39E)</name>
    <name type="common">Clostridium thermohydrosulfuricum</name>
    <dbReference type="NCBI Taxonomy" id="340099"/>
    <lineage>
        <taxon>Bacteria</taxon>
        <taxon>Bacillati</taxon>
        <taxon>Bacillota</taxon>
        <taxon>Clostridia</taxon>
        <taxon>Thermoanaerobacterales</taxon>
        <taxon>Thermoanaerobacteraceae</taxon>
        <taxon>Thermoanaerobacter</taxon>
    </lineage>
</organism>
<keyword id="KW-0963">Cytoplasm</keyword>
<keyword id="KW-0489">Methyltransferase</keyword>
<keyword id="KW-1185">Reference proteome</keyword>
<keyword id="KW-0949">S-adenosyl-L-methionine</keyword>
<keyword id="KW-0808">Transferase</keyword>
<dbReference type="EC" id="2.1.1.-" evidence="1"/>
<dbReference type="EMBL" id="CP000924">
    <property type="protein sequence ID" value="ABY95042.1"/>
    <property type="molecule type" value="Genomic_DNA"/>
</dbReference>
<dbReference type="RefSeq" id="WP_012269423.1">
    <property type="nucleotide sequence ID" value="NC_010321.1"/>
</dbReference>
<dbReference type="SMR" id="B0KA79"/>
<dbReference type="STRING" id="340099.Teth39_1391"/>
<dbReference type="KEGG" id="tpd:Teth39_1391"/>
<dbReference type="eggNOG" id="COG2264">
    <property type="taxonomic scope" value="Bacteria"/>
</dbReference>
<dbReference type="HOGENOM" id="CLU_049382_0_1_9"/>
<dbReference type="Proteomes" id="UP000002156">
    <property type="component" value="Chromosome"/>
</dbReference>
<dbReference type="GO" id="GO:0005737">
    <property type="term" value="C:cytoplasm"/>
    <property type="evidence" value="ECO:0007669"/>
    <property type="project" value="UniProtKB-SubCell"/>
</dbReference>
<dbReference type="GO" id="GO:0016279">
    <property type="term" value="F:protein-lysine N-methyltransferase activity"/>
    <property type="evidence" value="ECO:0007669"/>
    <property type="project" value="RHEA"/>
</dbReference>
<dbReference type="GO" id="GO:0032259">
    <property type="term" value="P:methylation"/>
    <property type="evidence" value="ECO:0007669"/>
    <property type="project" value="UniProtKB-KW"/>
</dbReference>
<dbReference type="CDD" id="cd02440">
    <property type="entry name" value="AdoMet_MTases"/>
    <property type="match status" value="1"/>
</dbReference>
<dbReference type="Gene3D" id="3.40.50.150">
    <property type="entry name" value="Vaccinia Virus protein VP39"/>
    <property type="match status" value="1"/>
</dbReference>
<dbReference type="HAMAP" id="MF_00735">
    <property type="entry name" value="Methyltr_PrmA"/>
    <property type="match status" value="1"/>
</dbReference>
<dbReference type="InterPro" id="IPR050078">
    <property type="entry name" value="Ribosomal_L11_MeTrfase_PrmA"/>
</dbReference>
<dbReference type="InterPro" id="IPR004498">
    <property type="entry name" value="Ribosomal_PrmA_MeTrfase"/>
</dbReference>
<dbReference type="InterPro" id="IPR029063">
    <property type="entry name" value="SAM-dependent_MTases_sf"/>
</dbReference>
<dbReference type="NCBIfam" id="TIGR00406">
    <property type="entry name" value="prmA"/>
    <property type="match status" value="1"/>
</dbReference>
<dbReference type="PANTHER" id="PTHR43648">
    <property type="entry name" value="ELECTRON TRANSFER FLAVOPROTEIN BETA SUBUNIT LYSINE METHYLTRANSFERASE"/>
    <property type="match status" value="1"/>
</dbReference>
<dbReference type="PANTHER" id="PTHR43648:SF1">
    <property type="entry name" value="ELECTRON TRANSFER FLAVOPROTEIN BETA SUBUNIT LYSINE METHYLTRANSFERASE"/>
    <property type="match status" value="1"/>
</dbReference>
<dbReference type="Pfam" id="PF06325">
    <property type="entry name" value="PrmA"/>
    <property type="match status" value="1"/>
</dbReference>
<dbReference type="PIRSF" id="PIRSF000401">
    <property type="entry name" value="RPL11_MTase"/>
    <property type="match status" value="1"/>
</dbReference>
<dbReference type="SUPFAM" id="SSF53335">
    <property type="entry name" value="S-adenosyl-L-methionine-dependent methyltransferases"/>
    <property type="match status" value="1"/>
</dbReference>
<protein>
    <recommendedName>
        <fullName evidence="1">Ribosomal protein L11 methyltransferase</fullName>
        <shortName evidence="1">L11 Mtase</shortName>
        <ecNumber evidence="1">2.1.1.-</ecNumber>
    </recommendedName>
</protein>
<accession>B0KA79</accession>
<gene>
    <name evidence="1" type="primary">prmA</name>
    <name type="ordered locus">Teth39_1391</name>
</gene>
<evidence type="ECO:0000255" key="1">
    <source>
        <dbReference type="HAMAP-Rule" id="MF_00735"/>
    </source>
</evidence>
<name>PRMA_THEP3</name>
<sequence>MKWIEVQVTTTQEAEEAVTNIMHELGAGGVVIKNPNDVKLLAQSDNWDYLDSSLFEEEGNIKVFAYFPIASDTTDKINILKDRIVELKSFGIDIGNFDVKVSEVDEADWENNWKQYYKPLKIGKKIVIKPSWEEYVSQGEEIIIELDPGMAFGTGTHETTKMCLEFLEDIVMPESIVFDVGCGSGILSITSSKLGAKEVYAADIDEVSVEVARQNVELNNLQNVKVFKSDLLSEFRGKADIIVANIIADVIIKLSAEVPKYLKEEGLFLASGIIKSRKEEVLQKVEEFFEVLQIREEGEWCAILSRKK</sequence>
<comment type="function">
    <text evidence="1">Methylates ribosomal protein L11.</text>
</comment>
<comment type="catalytic activity">
    <reaction evidence="1">
        <text>L-lysyl-[protein] + 3 S-adenosyl-L-methionine = N(6),N(6),N(6)-trimethyl-L-lysyl-[protein] + 3 S-adenosyl-L-homocysteine + 3 H(+)</text>
        <dbReference type="Rhea" id="RHEA:54192"/>
        <dbReference type="Rhea" id="RHEA-COMP:9752"/>
        <dbReference type="Rhea" id="RHEA-COMP:13826"/>
        <dbReference type="ChEBI" id="CHEBI:15378"/>
        <dbReference type="ChEBI" id="CHEBI:29969"/>
        <dbReference type="ChEBI" id="CHEBI:57856"/>
        <dbReference type="ChEBI" id="CHEBI:59789"/>
        <dbReference type="ChEBI" id="CHEBI:61961"/>
    </reaction>
</comment>
<comment type="subcellular location">
    <subcellularLocation>
        <location evidence="1">Cytoplasm</location>
    </subcellularLocation>
</comment>
<comment type="similarity">
    <text evidence="1">Belongs to the methyltransferase superfamily. PrmA family.</text>
</comment>
<reference key="1">
    <citation type="submission" date="2008-01" db="EMBL/GenBank/DDBJ databases">
        <title>Complete sequence of Thermoanaerobacter pseudethanolicus 39E.</title>
        <authorList>
            <person name="Copeland A."/>
            <person name="Lucas S."/>
            <person name="Lapidus A."/>
            <person name="Barry K."/>
            <person name="Glavina del Rio T."/>
            <person name="Dalin E."/>
            <person name="Tice H."/>
            <person name="Pitluck S."/>
            <person name="Bruce D."/>
            <person name="Goodwin L."/>
            <person name="Saunders E."/>
            <person name="Brettin T."/>
            <person name="Detter J.C."/>
            <person name="Han C."/>
            <person name="Schmutz J."/>
            <person name="Larimer F."/>
            <person name="Land M."/>
            <person name="Hauser L."/>
            <person name="Kyrpides N."/>
            <person name="Lykidis A."/>
            <person name="Hemme C."/>
            <person name="Fields M.W."/>
            <person name="He Z."/>
            <person name="Zhou J."/>
            <person name="Richardson P."/>
        </authorList>
    </citation>
    <scope>NUCLEOTIDE SEQUENCE [LARGE SCALE GENOMIC DNA]</scope>
    <source>
        <strain>ATCC 33223 / DSM 2355 / 39E</strain>
    </source>
</reference>